<organism>
    <name type="scientific">Methanoculleus marisnigri (strain ATCC 35101 / DSM 1498 / JR1)</name>
    <dbReference type="NCBI Taxonomy" id="368407"/>
    <lineage>
        <taxon>Archaea</taxon>
        <taxon>Methanobacteriati</taxon>
        <taxon>Methanobacteriota</taxon>
        <taxon>Stenosarchaea group</taxon>
        <taxon>Methanomicrobia</taxon>
        <taxon>Methanomicrobiales</taxon>
        <taxon>Methanomicrobiaceae</taxon>
        <taxon>Methanoculleus</taxon>
    </lineage>
</organism>
<feature type="chain" id="PRO_0000304193" description="DNA-directed RNA polymerase subunit Rpo10">
    <location>
        <begin position="1"/>
        <end position="62"/>
    </location>
</feature>
<feature type="binding site" evidence="1">
    <location>
        <position position="6"/>
    </location>
    <ligand>
        <name>Zn(2+)</name>
        <dbReference type="ChEBI" id="CHEBI:29105"/>
    </ligand>
</feature>
<feature type="binding site" evidence="1">
    <location>
        <position position="9"/>
    </location>
    <ligand>
        <name>Zn(2+)</name>
        <dbReference type="ChEBI" id="CHEBI:29105"/>
    </ligand>
</feature>
<feature type="binding site" evidence="1">
    <location>
        <position position="43"/>
    </location>
    <ligand>
        <name>Zn(2+)</name>
        <dbReference type="ChEBI" id="CHEBI:29105"/>
    </ligand>
</feature>
<feature type="binding site" evidence="1">
    <location>
        <position position="44"/>
    </location>
    <ligand>
        <name>Zn(2+)</name>
        <dbReference type="ChEBI" id="CHEBI:29105"/>
    </ligand>
</feature>
<protein>
    <recommendedName>
        <fullName evidence="1">DNA-directed RNA polymerase subunit Rpo10</fullName>
        <ecNumber evidence="1">2.7.7.6</ecNumber>
    </recommendedName>
    <alternativeName>
        <fullName evidence="1">DNA-directed RNA polymerase subunit N</fullName>
    </alternativeName>
</protein>
<comment type="function">
    <text evidence="1">DNA-dependent RNA polymerase (RNAP) catalyzes the transcription of DNA into RNA using the four ribonucleoside triphosphates as substrates.</text>
</comment>
<comment type="catalytic activity">
    <reaction evidence="1">
        <text>RNA(n) + a ribonucleoside 5'-triphosphate = RNA(n+1) + diphosphate</text>
        <dbReference type="Rhea" id="RHEA:21248"/>
        <dbReference type="Rhea" id="RHEA-COMP:14527"/>
        <dbReference type="Rhea" id="RHEA-COMP:17342"/>
        <dbReference type="ChEBI" id="CHEBI:33019"/>
        <dbReference type="ChEBI" id="CHEBI:61557"/>
        <dbReference type="ChEBI" id="CHEBI:140395"/>
        <dbReference type="EC" id="2.7.7.6"/>
    </reaction>
</comment>
<comment type="cofactor">
    <cofactor evidence="1">
        <name>Zn(2+)</name>
        <dbReference type="ChEBI" id="CHEBI:29105"/>
    </cofactor>
    <text evidence="1">Binds 1 zinc ion.</text>
</comment>
<comment type="subunit">
    <text evidence="1">Part of the RNA polymerase complex.</text>
</comment>
<comment type="subcellular location">
    <subcellularLocation>
        <location evidence="1">Cytoplasm</location>
    </subcellularLocation>
</comment>
<comment type="similarity">
    <text evidence="1">Belongs to the archaeal Rpo10/eukaryotic RPB10 RNA polymerase subunit family.</text>
</comment>
<name>RPO10_METMJ</name>
<keyword id="KW-0963">Cytoplasm</keyword>
<keyword id="KW-0240">DNA-directed RNA polymerase</keyword>
<keyword id="KW-0479">Metal-binding</keyword>
<keyword id="KW-0548">Nucleotidyltransferase</keyword>
<keyword id="KW-0804">Transcription</keyword>
<keyword id="KW-0808">Transferase</keyword>
<keyword id="KW-0862">Zinc</keyword>
<evidence type="ECO:0000255" key="1">
    <source>
        <dbReference type="HAMAP-Rule" id="MF_00250"/>
    </source>
</evidence>
<accession>A3CWI3</accession>
<gene>
    <name evidence="1" type="primary">rpo10</name>
    <name evidence="1" type="synonym">rpoN</name>
    <name type="ordered locus">Memar_1807</name>
</gene>
<reference key="1">
    <citation type="journal article" date="2009" name="Stand. Genomic Sci.">
        <title>Complete genome sequence of Methanoculleus marisnigri Romesser et al. 1981 type strain JR1.</title>
        <authorList>
            <person name="Anderson I.J."/>
            <person name="Sieprawska-Lupa M."/>
            <person name="Lapidus A."/>
            <person name="Nolan M."/>
            <person name="Copeland A."/>
            <person name="Glavina Del Rio T."/>
            <person name="Tice H."/>
            <person name="Dalin E."/>
            <person name="Barry K."/>
            <person name="Saunders E."/>
            <person name="Han C."/>
            <person name="Brettin T."/>
            <person name="Detter J.C."/>
            <person name="Bruce D."/>
            <person name="Mikhailova N."/>
            <person name="Pitluck S."/>
            <person name="Hauser L."/>
            <person name="Land M."/>
            <person name="Lucas S."/>
            <person name="Richardson P."/>
            <person name="Whitman W.B."/>
            <person name="Kyrpides N.C."/>
        </authorList>
    </citation>
    <scope>NUCLEOTIDE SEQUENCE [LARGE SCALE GENOMIC DNA]</scope>
    <source>
        <strain>ATCC 35101 / DSM 1498 / JR1</strain>
    </source>
</reference>
<sequence>MIPVRCFTCGKVVSTAWKEFKERRDAGEDPKRILDDLGLERYCCRRMLLTHKETVEDLNPYQ</sequence>
<dbReference type="EC" id="2.7.7.6" evidence="1"/>
<dbReference type="EMBL" id="CP000562">
    <property type="protein sequence ID" value="ABN57733.1"/>
    <property type="molecule type" value="Genomic_DNA"/>
</dbReference>
<dbReference type="RefSeq" id="WP_011844642.1">
    <property type="nucleotide sequence ID" value="NC_009051.1"/>
</dbReference>
<dbReference type="SMR" id="A3CWI3"/>
<dbReference type="STRING" id="368407.Memar_1807"/>
<dbReference type="GeneID" id="31759187"/>
<dbReference type="KEGG" id="mem:Memar_1807"/>
<dbReference type="eggNOG" id="arCOG04244">
    <property type="taxonomic scope" value="Archaea"/>
</dbReference>
<dbReference type="HOGENOM" id="CLU_143122_1_1_2"/>
<dbReference type="OrthoDB" id="371754at2157"/>
<dbReference type="Proteomes" id="UP000002146">
    <property type="component" value="Chromosome"/>
</dbReference>
<dbReference type="GO" id="GO:0005737">
    <property type="term" value="C:cytoplasm"/>
    <property type="evidence" value="ECO:0007669"/>
    <property type="project" value="UniProtKB-SubCell"/>
</dbReference>
<dbReference type="GO" id="GO:0000428">
    <property type="term" value="C:DNA-directed RNA polymerase complex"/>
    <property type="evidence" value="ECO:0007669"/>
    <property type="project" value="UniProtKB-KW"/>
</dbReference>
<dbReference type="GO" id="GO:0003677">
    <property type="term" value="F:DNA binding"/>
    <property type="evidence" value="ECO:0007669"/>
    <property type="project" value="InterPro"/>
</dbReference>
<dbReference type="GO" id="GO:0003899">
    <property type="term" value="F:DNA-directed RNA polymerase activity"/>
    <property type="evidence" value="ECO:0007669"/>
    <property type="project" value="UniProtKB-UniRule"/>
</dbReference>
<dbReference type="GO" id="GO:0008270">
    <property type="term" value="F:zinc ion binding"/>
    <property type="evidence" value="ECO:0007669"/>
    <property type="project" value="UniProtKB-UniRule"/>
</dbReference>
<dbReference type="GO" id="GO:0006351">
    <property type="term" value="P:DNA-templated transcription"/>
    <property type="evidence" value="ECO:0007669"/>
    <property type="project" value="UniProtKB-UniRule"/>
</dbReference>
<dbReference type="Gene3D" id="1.10.10.60">
    <property type="entry name" value="Homeodomain-like"/>
    <property type="match status" value="1"/>
</dbReference>
<dbReference type="HAMAP" id="MF_00250">
    <property type="entry name" value="RNApol_arch_Rpo10"/>
    <property type="match status" value="1"/>
</dbReference>
<dbReference type="InterPro" id="IPR023580">
    <property type="entry name" value="RNA_pol_su_RPB10"/>
</dbReference>
<dbReference type="InterPro" id="IPR020789">
    <property type="entry name" value="RNA_pol_suN_Zn-BS"/>
</dbReference>
<dbReference type="InterPro" id="IPR000268">
    <property type="entry name" value="RPABC5/Rpb10"/>
</dbReference>
<dbReference type="NCBIfam" id="NF003089">
    <property type="entry name" value="PRK04016.1"/>
    <property type="match status" value="1"/>
</dbReference>
<dbReference type="PANTHER" id="PTHR23431:SF3">
    <property type="entry name" value="DNA-DIRECTED RNA POLYMERASES I, II, AND III SUBUNIT RPABC5"/>
    <property type="match status" value="1"/>
</dbReference>
<dbReference type="PANTHER" id="PTHR23431">
    <property type="entry name" value="DNA-DIRECTED RNA POLYMERASES I, II, AND III SUBUNIT RPABC5 FAMILY MEMBER"/>
    <property type="match status" value="1"/>
</dbReference>
<dbReference type="Pfam" id="PF01194">
    <property type="entry name" value="RNA_pol_N"/>
    <property type="match status" value="1"/>
</dbReference>
<dbReference type="PIRSF" id="PIRSF005653">
    <property type="entry name" value="RNA_pol_N/8_sub"/>
    <property type="match status" value="1"/>
</dbReference>
<dbReference type="SUPFAM" id="SSF46924">
    <property type="entry name" value="RNA polymerase subunit RPB10"/>
    <property type="match status" value="1"/>
</dbReference>
<dbReference type="PROSITE" id="PS01112">
    <property type="entry name" value="RNA_POL_N_8KD"/>
    <property type="match status" value="1"/>
</dbReference>
<proteinExistence type="inferred from homology"/>